<evidence type="ECO:0000255" key="1"/>
<evidence type="ECO:0000256" key="2">
    <source>
        <dbReference type="SAM" id="MobiDB-lite"/>
    </source>
</evidence>
<evidence type="ECO:0000269" key="3">
    <source>
    </source>
</evidence>
<evidence type="ECO:0000269" key="4">
    <source>
    </source>
</evidence>
<evidence type="ECO:0000303" key="5">
    <source>
    </source>
</evidence>
<evidence type="ECO:0000303" key="6">
    <source>
    </source>
</evidence>
<evidence type="ECO:0000305" key="7"/>
<evidence type="ECO:0000305" key="8">
    <source>
    </source>
</evidence>
<evidence type="ECO:0000312" key="9">
    <source>
        <dbReference type="PDB" id="2YYF"/>
    </source>
</evidence>
<evidence type="ECO:0007744" key="10">
    <source>
        <dbReference type="PDB" id="2JQC"/>
    </source>
</evidence>
<evidence type="ECO:0007744" key="11">
    <source>
        <dbReference type="PDB" id="2YYF"/>
    </source>
</evidence>
<evidence type="ECO:0007829" key="12">
    <source>
        <dbReference type="PDB" id="2JQB"/>
    </source>
</evidence>
<evidence type="ECO:0007829" key="13">
    <source>
        <dbReference type="PDB" id="2YYF"/>
    </source>
</evidence>
<dbReference type="EMBL" id="EU048276">
    <property type="protein sequence ID" value="ABW16858.1"/>
    <property type="molecule type" value="mRNA"/>
</dbReference>
<dbReference type="PDB" id="2JQB">
    <property type="method" value="NMR"/>
    <property type="chains" value="A=55-69"/>
</dbReference>
<dbReference type="PDB" id="2JQC">
    <property type="method" value="NMR"/>
    <property type="chains" value="A=55-69"/>
</dbReference>
<dbReference type="PDB" id="2YYF">
    <property type="method" value="NMR"/>
    <property type="chains" value="A=55-69"/>
</dbReference>
<dbReference type="PDBsum" id="2JQB"/>
<dbReference type="PDBsum" id="2JQC"/>
<dbReference type="PDBsum" id="2YYF"/>
<dbReference type="BMRB" id="B2KPN7"/>
<dbReference type="SMR" id="B2KPN7"/>
<dbReference type="ConoServer" id="2783">
    <property type="toxin name" value="conomarphin-Mr1 precursor"/>
</dbReference>
<dbReference type="EvolutionaryTrace" id="B2KPN7"/>
<dbReference type="GO" id="GO:0005576">
    <property type="term" value="C:extracellular region"/>
    <property type="evidence" value="ECO:0007669"/>
    <property type="project" value="UniProtKB-SubCell"/>
</dbReference>
<dbReference type="GO" id="GO:0008200">
    <property type="term" value="F:ion channel inhibitor activity"/>
    <property type="evidence" value="ECO:0007669"/>
    <property type="project" value="InterPro"/>
</dbReference>
<dbReference type="GO" id="GO:0090729">
    <property type="term" value="F:toxin activity"/>
    <property type="evidence" value="ECO:0007669"/>
    <property type="project" value="UniProtKB-KW"/>
</dbReference>
<dbReference type="InterPro" id="IPR004214">
    <property type="entry name" value="Conotoxin"/>
</dbReference>
<dbReference type="Pfam" id="PF02950">
    <property type="entry name" value="Conotoxin"/>
    <property type="match status" value="1"/>
</dbReference>
<feature type="signal peptide" evidence="1">
    <location>
        <begin position="1"/>
        <end position="21"/>
    </location>
</feature>
<feature type="propeptide" id="PRO_0000366051" evidence="3">
    <location>
        <begin position="22"/>
        <end position="54"/>
    </location>
</feature>
<feature type="peptide" id="PRO_5000346506" description="Conomarphin-Mr3" evidence="3">
    <location>
        <begin position="55"/>
        <end position="69"/>
    </location>
</feature>
<feature type="propeptide" id="PRO_0000366052" evidence="3">
    <location>
        <begin position="70"/>
        <end position="71"/>
    </location>
</feature>
<feature type="region of interest" description="Disordered" evidence="2">
    <location>
        <begin position="27"/>
        <end position="48"/>
    </location>
</feature>
<feature type="compositionally biased region" description="Basic and acidic residues" evidence="2">
    <location>
        <begin position="28"/>
        <end position="39"/>
    </location>
</feature>
<feature type="modified residue" description="4-hydroxyproline; partial" evidence="3 4">
    <location>
        <position position="64"/>
    </location>
</feature>
<feature type="modified residue" description="D-phenylalanine; partial" evidence="3 4">
    <location>
        <position position="67"/>
    </location>
</feature>
<feature type="strand" evidence="13">
    <location>
        <begin position="61"/>
        <end position="63"/>
    </location>
</feature>
<feature type="helix" evidence="12">
    <location>
        <begin position="66"/>
        <end position="68"/>
    </location>
</feature>
<keyword id="KW-0002">3D-structure</keyword>
<keyword id="KW-0165">Cleavage on pair of basic residues</keyword>
<keyword id="KW-0208">D-amino acid</keyword>
<keyword id="KW-0903">Direct protein sequencing</keyword>
<keyword id="KW-0379">Hydroxylation</keyword>
<keyword id="KW-0528">Neurotoxin</keyword>
<keyword id="KW-0964">Secreted</keyword>
<keyword id="KW-0732">Signal</keyword>
<keyword id="KW-0800">Toxin</keyword>
<proteinExistence type="evidence at protein level"/>
<comment type="function">
    <text>May act as a neurotoxin.</text>
</comment>
<comment type="subcellular location">
    <subcellularLocation>
        <location evidence="3">Secreted</location>
    </subcellularLocation>
</comment>
<comment type="tissue specificity">
    <text evidence="8">Expressed by the venom duct.</text>
</comment>
<comment type="PTM">
    <text evidence="3">The D-Phe is essential to the structural conformation.</text>
</comment>
<comment type="PTM">
    <text>Since conomarphin is a cysteine-free peptide, hydroxyproline plays a critical role in maintaining a restricted conformation of the peptide.</text>
</comment>
<comment type="PTM">
    <text evidence="3 4">Mature peptide with hydroxylation at Pro-64 and D-amino acid at Phe-67 are described by Han and colleagues (2008), whereas the same sequence without modification is described by Fu and colleagues (2022).</text>
</comment>
<comment type="mass spectrometry"/>
<comment type="miscellaneous">
    <text evidence="4">Negative results: the unmodified synthetic peptide shows no or weak activity on muscular and neuronal nicotinic acetylcholine receptors (alpha-3-beta-2/CHRNA3-CHRNB2, alpha-3-beta-4/CHRNA3-CHRNB4, alpha-4-beta-2/CHRNA4-CHRNB2, and alpha-1-beta-1-delta-epsilon/CHRNA1-CHRNB1-CHRND-CHRNE).</text>
</comment>
<comment type="miscellaneous">
    <text evidence="7">The mature peptide does not contain cysteine residues.</text>
</comment>
<comment type="miscellaneous">
    <text evidence="7">The amino acid sequence of the precursor sequence of conomarphin is identical to that of C.imperialis Im-conomarphin (AC P0CH39). Their nucleotide sequences are not identical.</text>
</comment>
<comment type="similarity">
    <text evidence="7">Belongs to the conotoxin M superfamily.</text>
</comment>
<name>COMA_CONMR</name>
<organism>
    <name type="scientific">Conus marmoreus</name>
    <name type="common">Marble cone</name>
    <dbReference type="NCBI Taxonomy" id="42752"/>
    <lineage>
        <taxon>Eukaryota</taxon>
        <taxon>Metazoa</taxon>
        <taxon>Spiralia</taxon>
        <taxon>Lophotrochozoa</taxon>
        <taxon>Mollusca</taxon>
        <taxon>Gastropoda</taxon>
        <taxon>Caenogastropoda</taxon>
        <taxon>Neogastropoda</taxon>
        <taxon>Conoidea</taxon>
        <taxon>Conidae</taxon>
        <taxon>Conus</taxon>
    </lineage>
</organism>
<protein>
    <recommendedName>
        <fullName evidence="6">Conomarphin-Mr3</fullName>
    </recommendedName>
    <alternativeName>
        <fullName evidence="5">Conomarphin</fullName>
    </alternativeName>
    <alternativeName>
        <fullName evidence="9">Marmophine</fullName>
    </alternativeName>
    <alternativeName>
        <fullName evidence="6">Mr-1</fullName>
    </alternativeName>
</protein>
<reference key="1">
    <citation type="journal article" date="2008" name="FEBS J.">
        <title>Purification and structural characterization of a D-amino acid-containing conopeptide, conomarphin, from Conus marmoreus.</title>
        <authorList>
            <person name="Han Y."/>
            <person name="Huang F."/>
            <person name="Jiang H."/>
            <person name="Liu L."/>
            <person name="Wang Q."/>
            <person name="Wang Y."/>
            <person name="Shao X."/>
            <person name="Chi C."/>
            <person name="Du W."/>
            <person name="Wang C."/>
        </authorList>
    </citation>
    <scope>NUCLEOTIDE SEQUENCE [MRNA]</scope>
    <scope>PROTEIN SEQUENCE OF 55-69 (D-PHE13-CONOMARPHIN)</scope>
    <scope>SYNTHESIS OF 55-69 (L-PHE13-CONOMARPHIN)</scope>
    <scope>HYDROXYLATION AT PRO-64</scope>
    <scope>D-AMINO ACID AT PHE-67</scope>
    <scope>SUBCELLULAR LOCATION</scope>
    <scope>STRUCTURE BY NMR OF 55-69</scope>
    <source>
        <tissue>Venom</tissue>
        <tissue>Venom duct</tissue>
    </source>
</reference>
<reference key="2">
    <citation type="journal article" date="2022" name="J. Venom. Anim. Toxins Incl. Trop. Dis.">
        <title>Isolation and characterization of five novel disulfide-poor conopeptides from Conus marmoreus venom.</title>
        <authorList>
            <person name="Fu Y."/>
            <person name="Zhang Y."/>
            <person name="Ju S."/>
            <person name="Ma B."/>
            <person name="Huang W."/>
            <person name="Luo S."/>
        </authorList>
    </citation>
    <scope>PROTEIN SEQUENCE OF 55-69</scope>
    <scope>SYNTHESIS OF 55-69</scope>
    <scope>NO PTM</scope>
    <scope>MASS SPECTROMETRY</scope>
    <scope>SUBCELLULAR LOCATION</scope>
    <source>
        <tissue>Venom</tissue>
    </source>
</reference>
<reference evidence="10 11" key="3">
    <citation type="journal article" date="2009" name="Toxicon">
        <title>Solution structure of Hyp10Pro variant of conomarphin, a cysteine-free and d-amino-acid containing conopeptide.</title>
        <authorList>
            <person name="Huang F."/>
            <person name="Du W."/>
        </authorList>
    </citation>
    <scope>STRUCTURE BY NMR OF 55-69 OF HYP-64 VARIANT</scope>
</reference>
<accession>B2KPN7</accession>
<sequence>MMSKLGVLLCIFLVLFPMATLQLDGDQTADRHADQRGQDLTEQQRNSKRVLKKRDWEYHAHPKPNSFWTLV</sequence>